<evidence type="ECO:0000255" key="1">
    <source>
        <dbReference type="HAMAP-Rule" id="MF_01227"/>
    </source>
</evidence>
<dbReference type="EC" id="6.3.4.2" evidence="1"/>
<dbReference type="EMBL" id="CP000886">
    <property type="protein sequence ID" value="ABX69006.1"/>
    <property type="molecule type" value="Genomic_DNA"/>
</dbReference>
<dbReference type="RefSeq" id="WP_000210863.1">
    <property type="nucleotide sequence ID" value="NC_010102.1"/>
</dbReference>
<dbReference type="SMR" id="A9N2F5"/>
<dbReference type="MEROPS" id="C26.964"/>
<dbReference type="KEGG" id="spq:SPAB_03666"/>
<dbReference type="PATRIC" id="fig|1016998.12.peg.3453"/>
<dbReference type="HOGENOM" id="CLU_011675_5_0_6"/>
<dbReference type="BioCyc" id="SENT1016998:SPAB_RS14930-MONOMER"/>
<dbReference type="UniPathway" id="UPA00159">
    <property type="reaction ID" value="UER00277"/>
</dbReference>
<dbReference type="Proteomes" id="UP000008556">
    <property type="component" value="Chromosome"/>
</dbReference>
<dbReference type="GO" id="GO:0005829">
    <property type="term" value="C:cytosol"/>
    <property type="evidence" value="ECO:0007669"/>
    <property type="project" value="TreeGrafter"/>
</dbReference>
<dbReference type="GO" id="GO:0005524">
    <property type="term" value="F:ATP binding"/>
    <property type="evidence" value="ECO:0007669"/>
    <property type="project" value="UniProtKB-KW"/>
</dbReference>
<dbReference type="GO" id="GO:0003883">
    <property type="term" value="F:CTP synthase activity"/>
    <property type="evidence" value="ECO:0007669"/>
    <property type="project" value="UniProtKB-UniRule"/>
</dbReference>
<dbReference type="GO" id="GO:0004359">
    <property type="term" value="F:glutaminase activity"/>
    <property type="evidence" value="ECO:0007669"/>
    <property type="project" value="RHEA"/>
</dbReference>
<dbReference type="GO" id="GO:0042802">
    <property type="term" value="F:identical protein binding"/>
    <property type="evidence" value="ECO:0007669"/>
    <property type="project" value="TreeGrafter"/>
</dbReference>
<dbReference type="GO" id="GO:0046872">
    <property type="term" value="F:metal ion binding"/>
    <property type="evidence" value="ECO:0007669"/>
    <property type="project" value="UniProtKB-KW"/>
</dbReference>
<dbReference type="GO" id="GO:0044210">
    <property type="term" value="P:'de novo' CTP biosynthetic process"/>
    <property type="evidence" value="ECO:0007669"/>
    <property type="project" value="UniProtKB-UniRule"/>
</dbReference>
<dbReference type="GO" id="GO:0019856">
    <property type="term" value="P:pyrimidine nucleobase biosynthetic process"/>
    <property type="evidence" value="ECO:0007669"/>
    <property type="project" value="TreeGrafter"/>
</dbReference>
<dbReference type="CDD" id="cd03113">
    <property type="entry name" value="CTPS_N"/>
    <property type="match status" value="1"/>
</dbReference>
<dbReference type="CDD" id="cd01746">
    <property type="entry name" value="GATase1_CTP_Synthase"/>
    <property type="match status" value="1"/>
</dbReference>
<dbReference type="FunFam" id="3.40.50.300:FF:000009">
    <property type="entry name" value="CTP synthase"/>
    <property type="match status" value="1"/>
</dbReference>
<dbReference type="FunFam" id="3.40.50.880:FF:000002">
    <property type="entry name" value="CTP synthase"/>
    <property type="match status" value="1"/>
</dbReference>
<dbReference type="Gene3D" id="3.40.50.880">
    <property type="match status" value="1"/>
</dbReference>
<dbReference type="Gene3D" id="3.40.50.300">
    <property type="entry name" value="P-loop containing nucleotide triphosphate hydrolases"/>
    <property type="match status" value="1"/>
</dbReference>
<dbReference type="HAMAP" id="MF_01227">
    <property type="entry name" value="PyrG"/>
    <property type="match status" value="1"/>
</dbReference>
<dbReference type="InterPro" id="IPR029062">
    <property type="entry name" value="Class_I_gatase-like"/>
</dbReference>
<dbReference type="InterPro" id="IPR004468">
    <property type="entry name" value="CTP_synthase"/>
</dbReference>
<dbReference type="InterPro" id="IPR017456">
    <property type="entry name" value="CTP_synthase_N"/>
</dbReference>
<dbReference type="InterPro" id="IPR017926">
    <property type="entry name" value="GATASE"/>
</dbReference>
<dbReference type="InterPro" id="IPR033828">
    <property type="entry name" value="GATase1_CTP_Synthase"/>
</dbReference>
<dbReference type="InterPro" id="IPR027417">
    <property type="entry name" value="P-loop_NTPase"/>
</dbReference>
<dbReference type="NCBIfam" id="NF003792">
    <property type="entry name" value="PRK05380.1"/>
    <property type="match status" value="1"/>
</dbReference>
<dbReference type="NCBIfam" id="TIGR00337">
    <property type="entry name" value="PyrG"/>
    <property type="match status" value="1"/>
</dbReference>
<dbReference type="PANTHER" id="PTHR11550">
    <property type="entry name" value="CTP SYNTHASE"/>
    <property type="match status" value="1"/>
</dbReference>
<dbReference type="PANTHER" id="PTHR11550:SF0">
    <property type="entry name" value="CTP SYNTHASE-RELATED"/>
    <property type="match status" value="1"/>
</dbReference>
<dbReference type="Pfam" id="PF06418">
    <property type="entry name" value="CTP_synth_N"/>
    <property type="match status" value="1"/>
</dbReference>
<dbReference type="Pfam" id="PF00117">
    <property type="entry name" value="GATase"/>
    <property type="match status" value="1"/>
</dbReference>
<dbReference type="SUPFAM" id="SSF52317">
    <property type="entry name" value="Class I glutamine amidotransferase-like"/>
    <property type="match status" value="1"/>
</dbReference>
<dbReference type="SUPFAM" id="SSF52540">
    <property type="entry name" value="P-loop containing nucleoside triphosphate hydrolases"/>
    <property type="match status" value="1"/>
</dbReference>
<dbReference type="PROSITE" id="PS51273">
    <property type="entry name" value="GATASE_TYPE_1"/>
    <property type="match status" value="1"/>
</dbReference>
<reference key="1">
    <citation type="submission" date="2007-11" db="EMBL/GenBank/DDBJ databases">
        <authorList>
            <consortium name="The Salmonella enterica serovar Paratyphi B Genome Sequencing Project"/>
            <person name="McClelland M."/>
            <person name="Sanderson E.K."/>
            <person name="Porwollik S."/>
            <person name="Spieth J."/>
            <person name="Clifton W.S."/>
            <person name="Fulton R."/>
            <person name="Cordes M."/>
            <person name="Wollam A."/>
            <person name="Shah N."/>
            <person name="Pepin K."/>
            <person name="Bhonagiri V."/>
            <person name="Nash W."/>
            <person name="Johnson M."/>
            <person name="Thiruvilangam P."/>
            <person name="Wilson R."/>
        </authorList>
    </citation>
    <scope>NUCLEOTIDE SEQUENCE [LARGE SCALE GENOMIC DNA]</scope>
    <source>
        <strain>ATCC BAA-1250 / SPB7</strain>
    </source>
</reference>
<keyword id="KW-0067">ATP-binding</keyword>
<keyword id="KW-0315">Glutamine amidotransferase</keyword>
<keyword id="KW-0436">Ligase</keyword>
<keyword id="KW-0460">Magnesium</keyword>
<keyword id="KW-0479">Metal-binding</keyword>
<keyword id="KW-0547">Nucleotide-binding</keyword>
<keyword id="KW-0665">Pyrimidine biosynthesis</keyword>
<accession>A9N2F5</accession>
<protein>
    <recommendedName>
        <fullName evidence="1">CTP synthase</fullName>
        <ecNumber evidence="1">6.3.4.2</ecNumber>
    </recommendedName>
    <alternativeName>
        <fullName evidence="1">Cytidine 5'-triphosphate synthase</fullName>
    </alternativeName>
    <alternativeName>
        <fullName evidence="1">Cytidine triphosphate synthetase</fullName>
        <shortName evidence="1">CTP synthetase</shortName>
        <shortName evidence="1">CTPS</shortName>
    </alternativeName>
    <alternativeName>
        <fullName evidence="1">UTP--ammonia ligase</fullName>
    </alternativeName>
</protein>
<sequence length="545" mass="60122">MTTNYIFVTGGVVSSLGKGIAAASLAAILEARGLNVTIMKLDPYINVDPGTMSPIQHGEVFVTEDGAETDLDLGHYERFIRTKMSRRNNFTTGRIYSDVLRKERRGDYLGATVQVIPHITNAIKERVLEGGEGHDVVLVEIGGTVGDIESLPFLEAIRQLAVDIGREHALFMHLTLVPYLAAAGEVKTKPTQHSVKELLSIGIQPDILICRSDRAVPANERAKIALFCNVPEKAVISMKDVDSIYKIPGLLKSQGLDDYICKRFSLNCPEANLSEWEQVIYEEANPAGEVTIGMVGKYIELPDAYKSVIEALKHGGLKNRVTVNIKLIDSQDVETRGVEILKDLDAILIPGGFGYRGVEGKIATARYARENNIPYLGICLGMQVALIEFARNVAGMDNANSTEFVPDCKYPVVALITEWRDEDGNVEVRSEKSDLGGTMRLGAQQCQLSDDSLVRQLYGASTIVERHRHRYEVNNMLLKQIEAAGLRVAGRSGDDQLVEIIEVPNHPWFVACQFHPEFTSTPRDGHPLFAGFVKAANEHQKRQAK</sequence>
<organism>
    <name type="scientific">Salmonella paratyphi B (strain ATCC BAA-1250 / SPB7)</name>
    <dbReference type="NCBI Taxonomy" id="1016998"/>
    <lineage>
        <taxon>Bacteria</taxon>
        <taxon>Pseudomonadati</taxon>
        <taxon>Pseudomonadota</taxon>
        <taxon>Gammaproteobacteria</taxon>
        <taxon>Enterobacterales</taxon>
        <taxon>Enterobacteriaceae</taxon>
        <taxon>Salmonella</taxon>
    </lineage>
</organism>
<name>PYRG_SALPB</name>
<proteinExistence type="inferred from homology"/>
<comment type="function">
    <text evidence="1">Catalyzes the ATP-dependent amination of UTP to CTP with either L-glutamine or ammonia as the source of nitrogen. Regulates intracellular CTP levels through interactions with the four ribonucleotide triphosphates.</text>
</comment>
<comment type="catalytic activity">
    <reaction evidence="1">
        <text>UTP + L-glutamine + ATP + H2O = CTP + L-glutamate + ADP + phosphate + 2 H(+)</text>
        <dbReference type="Rhea" id="RHEA:26426"/>
        <dbReference type="ChEBI" id="CHEBI:15377"/>
        <dbReference type="ChEBI" id="CHEBI:15378"/>
        <dbReference type="ChEBI" id="CHEBI:29985"/>
        <dbReference type="ChEBI" id="CHEBI:30616"/>
        <dbReference type="ChEBI" id="CHEBI:37563"/>
        <dbReference type="ChEBI" id="CHEBI:43474"/>
        <dbReference type="ChEBI" id="CHEBI:46398"/>
        <dbReference type="ChEBI" id="CHEBI:58359"/>
        <dbReference type="ChEBI" id="CHEBI:456216"/>
        <dbReference type="EC" id="6.3.4.2"/>
    </reaction>
</comment>
<comment type="catalytic activity">
    <reaction evidence="1">
        <text>L-glutamine + H2O = L-glutamate + NH4(+)</text>
        <dbReference type="Rhea" id="RHEA:15889"/>
        <dbReference type="ChEBI" id="CHEBI:15377"/>
        <dbReference type="ChEBI" id="CHEBI:28938"/>
        <dbReference type="ChEBI" id="CHEBI:29985"/>
        <dbReference type="ChEBI" id="CHEBI:58359"/>
    </reaction>
</comment>
<comment type="catalytic activity">
    <reaction evidence="1">
        <text>UTP + NH4(+) + ATP = CTP + ADP + phosphate + 2 H(+)</text>
        <dbReference type="Rhea" id="RHEA:16597"/>
        <dbReference type="ChEBI" id="CHEBI:15378"/>
        <dbReference type="ChEBI" id="CHEBI:28938"/>
        <dbReference type="ChEBI" id="CHEBI:30616"/>
        <dbReference type="ChEBI" id="CHEBI:37563"/>
        <dbReference type="ChEBI" id="CHEBI:43474"/>
        <dbReference type="ChEBI" id="CHEBI:46398"/>
        <dbReference type="ChEBI" id="CHEBI:456216"/>
    </reaction>
</comment>
<comment type="activity regulation">
    <text evidence="1">Allosterically activated by GTP, when glutamine is the substrate; GTP has no effect on the reaction when ammonia is the substrate. The allosteric effector GTP functions by stabilizing the protein conformation that binds the tetrahedral intermediate(s) formed during glutamine hydrolysis. Inhibited by the product CTP, via allosteric rather than competitive inhibition.</text>
</comment>
<comment type="pathway">
    <text evidence="1">Pyrimidine metabolism; CTP biosynthesis via de novo pathway; CTP from UDP: step 2/2.</text>
</comment>
<comment type="subunit">
    <text evidence="1">Homotetramer.</text>
</comment>
<comment type="miscellaneous">
    <text evidence="1">CTPSs have evolved a hybrid strategy for distinguishing between UTP and CTP. The overlapping regions of the product feedback inhibitory and substrate sites recognize a common feature in both compounds, the triphosphate moiety. To differentiate isosteric substrate and product pyrimidine rings, an additional pocket far from the expected kinase/ligase catalytic site, specifically recognizes the cytosine and ribose portions of the product inhibitor.</text>
</comment>
<comment type="similarity">
    <text evidence="1">Belongs to the CTP synthase family.</text>
</comment>
<gene>
    <name evidence="1" type="primary">pyrG</name>
    <name type="ordered locus">SPAB_03666</name>
</gene>
<feature type="chain" id="PRO_1000139563" description="CTP synthase">
    <location>
        <begin position="1"/>
        <end position="545"/>
    </location>
</feature>
<feature type="domain" description="Glutamine amidotransferase type-1" evidence="1">
    <location>
        <begin position="291"/>
        <end position="542"/>
    </location>
</feature>
<feature type="region of interest" description="Amidoligase domain" evidence="1">
    <location>
        <begin position="1"/>
        <end position="266"/>
    </location>
</feature>
<feature type="active site" description="Nucleophile; for glutamine hydrolysis" evidence="1">
    <location>
        <position position="379"/>
    </location>
</feature>
<feature type="active site" evidence="1">
    <location>
        <position position="515"/>
    </location>
</feature>
<feature type="active site" evidence="1">
    <location>
        <position position="517"/>
    </location>
</feature>
<feature type="binding site" evidence="1">
    <location>
        <position position="14"/>
    </location>
    <ligand>
        <name>CTP</name>
        <dbReference type="ChEBI" id="CHEBI:37563"/>
        <note>allosteric inhibitor</note>
    </ligand>
</feature>
<feature type="binding site" evidence="1">
    <location>
        <position position="14"/>
    </location>
    <ligand>
        <name>UTP</name>
        <dbReference type="ChEBI" id="CHEBI:46398"/>
    </ligand>
</feature>
<feature type="binding site" evidence="1">
    <location>
        <begin position="15"/>
        <end position="20"/>
    </location>
    <ligand>
        <name>ATP</name>
        <dbReference type="ChEBI" id="CHEBI:30616"/>
    </ligand>
</feature>
<feature type="binding site" evidence="1">
    <location>
        <position position="72"/>
    </location>
    <ligand>
        <name>ATP</name>
        <dbReference type="ChEBI" id="CHEBI:30616"/>
    </ligand>
</feature>
<feature type="binding site" evidence="1">
    <location>
        <position position="72"/>
    </location>
    <ligand>
        <name>Mg(2+)</name>
        <dbReference type="ChEBI" id="CHEBI:18420"/>
    </ligand>
</feature>
<feature type="binding site" evidence="1">
    <location>
        <position position="140"/>
    </location>
    <ligand>
        <name>Mg(2+)</name>
        <dbReference type="ChEBI" id="CHEBI:18420"/>
    </ligand>
</feature>
<feature type="binding site" evidence="1">
    <location>
        <begin position="147"/>
        <end position="149"/>
    </location>
    <ligand>
        <name>CTP</name>
        <dbReference type="ChEBI" id="CHEBI:37563"/>
        <note>allosteric inhibitor</note>
    </ligand>
</feature>
<feature type="binding site" evidence="1">
    <location>
        <begin position="187"/>
        <end position="192"/>
    </location>
    <ligand>
        <name>CTP</name>
        <dbReference type="ChEBI" id="CHEBI:37563"/>
        <note>allosteric inhibitor</note>
    </ligand>
</feature>
<feature type="binding site" evidence="1">
    <location>
        <begin position="187"/>
        <end position="192"/>
    </location>
    <ligand>
        <name>UTP</name>
        <dbReference type="ChEBI" id="CHEBI:46398"/>
    </ligand>
</feature>
<feature type="binding site" evidence="1">
    <location>
        <position position="223"/>
    </location>
    <ligand>
        <name>CTP</name>
        <dbReference type="ChEBI" id="CHEBI:37563"/>
        <note>allosteric inhibitor</note>
    </ligand>
</feature>
<feature type="binding site" evidence="1">
    <location>
        <position position="223"/>
    </location>
    <ligand>
        <name>UTP</name>
        <dbReference type="ChEBI" id="CHEBI:46398"/>
    </ligand>
</feature>
<feature type="binding site" evidence="1">
    <location>
        <begin position="239"/>
        <end position="241"/>
    </location>
    <ligand>
        <name>ATP</name>
        <dbReference type="ChEBI" id="CHEBI:30616"/>
    </ligand>
</feature>
<feature type="binding site" evidence="1">
    <location>
        <position position="352"/>
    </location>
    <ligand>
        <name>L-glutamine</name>
        <dbReference type="ChEBI" id="CHEBI:58359"/>
    </ligand>
</feature>
<feature type="binding site" evidence="1">
    <location>
        <begin position="380"/>
        <end position="383"/>
    </location>
    <ligand>
        <name>L-glutamine</name>
        <dbReference type="ChEBI" id="CHEBI:58359"/>
    </ligand>
</feature>
<feature type="binding site" evidence="1">
    <location>
        <position position="403"/>
    </location>
    <ligand>
        <name>L-glutamine</name>
        <dbReference type="ChEBI" id="CHEBI:58359"/>
    </ligand>
</feature>
<feature type="binding site" evidence="1">
    <location>
        <position position="470"/>
    </location>
    <ligand>
        <name>L-glutamine</name>
        <dbReference type="ChEBI" id="CHEBI:58359"/>
    </ligand>
</feature>